<proteinExistence type="evidence at protein level"/>
<organism>
    <name type="scientific">Homo sapiens</name>
    <name type="common">Human</name>
    <dbReference type="NCBI Taxonomy" id="9606"/>
    <lineage>
        <taxon>Eukaryota</taxon>
        <taxon>Metazoa</taxon>
        <taxon>Chordata</taxon>
        <taxon>Craniata</taxon>
        <taxon>Vertebrata</taxon>
        <taxon>Euteleostomi</taxon>
        <taxon>Mammalia</taxon>
        <taxon>Eutheria</taxon>
        <taxon>Euarchontoglires</taxon>
        <taxon>Primates</taxon>
        <taxon>Haplorrhini</taxon>
        <taxon>Catarrhini</taxon>
        <taxon>Hominidae</taxon>
        <taxon>Homo</taxon>
    </lineage>
</organism>
<sequence>MSELEQLRQEAEQLRNQIQDARKACNDATLVQITSNMDSVGRIQMRTRRTLRGHLAKIYAMHWGYDSRLLVSASQDGKLIIWDSYTTNKMHAIPLRSSWVMTCAYAPSGNYVACGGLDNICSIYNLKTREGNVRVSRELPGHTGYLSCCRFLDDSQIVTSSGDTTCALWDIETAQQTTTFTGHSGDVMSLSLSPDMRTFVSGACDASSKLWDIRDGMCRQSFTGHVSDINAVSFFPNGYAFATGSDDATCRLFDLRADQELLLYSHDNIICGITSVAFSKSGRLLLAGYDDFNCNVWDTLKGDRAGVLAGHDNRVSCLGVTDDGMAVATGSWDSFLRIWN</sequence>
<protein>
    <recommendedName>
        <fullName>Guanine nucleotide-binding protein subunit beta-4</fullName>
    </recommendedName>
    <alternativeName>
        <fullName>Transducin beta chain 4</fullName>
    </alternativeName>
</protein>
<accession>Q9HAV0</accession>
<accession>B3KMH5</accession>
<accession>D3DNR8</accession>
<comment type="function">
    <text>Guanine nucleotide-binding proteins (G proteins) are involved as a modulator or transducer in various transmembrane signaling systems. The beta and gamma chains are required for the GTPase activity, for replacement of GDP by GTP, and for G protein-effector interaction.</text>
</comment>
<comment type="subunit">
    <text>G proteins are composed of 3 units, alpha, beta and gamma.</text>
</comment>
<comment type="interaction">
    <interactant intactId="EBI-358539">
        <id>Q9HAV0</id>
    </interactant>
    <interactant intactId="EBI-718729">
        <id>P55212</id>
        <label>CASP6</label>
    </interactant>
    <organismsDiffer>false</organismsDiffer>
    <experiments>3</experiments>
</comment>
<comment type="interaction">
    <interactant intactId="EBI-358539">
        <id>Q9HAV0</id>
    </interactant>
    <interactant intactId="EBI-21591415">
        <id>P13473-2</id>
        <label>LAMP2</label>
    </interactant>
    <organismsDiffer>false</organismsDiffer>
    <experiments>3</experiments>
</comment>
<comment type="interaction">
    <interactant intactId="EBI-358539">
        <id>Q9HAV0</id>
    </interactant>
    <interactant intactId="EBI-2623095">
        <id>Q9Y371</id>
        <label>SH3GLB1</label>
    </interactant>
    <organismsDiffer>false</organismsDiffer>
    <experiments>3</experiments>
</comment>
<comment type="tissue specificity">
    <text evidence="3 4">Strongly expressed in lung and placenta, whereas it is weakly expressed in brain and heart. Abundantly expressed in the axons and Schwann cells of peripheral nerves.</text>
</comment>
<comment type="disease" evidence="4">
    <disease id="DI-03759">
        <name>Charcot-Marie-Tooth disease, dominant intermediate F</name>
        <acronym>CMTDIF</acronym>
        <description>A form of Charcot-Marie-Tooth disease, a disorder of the peripheral nervous system, characterized by progressive weakness and atrophy, initially of the peroneal muscles and later of the distal muscles of the arms. CMTDIF is characterized by onset around adolescence of slowly progressive distal muscle atrophy and weakness affecting the upper and lower limbs and resulting in steppage gait. There is distal sensory impairment with decreased reflexes. Nerve conduction velocities are variable, ranging from the demyelinating to the axonal range.</description>
        <dbReference type="MIM" id="615185"/>
    </disease>
    <text>The disease is caused by variants affecting the gene represented in this entry.</text>
</comment>
<comment type="similarity">
    <text evidence="6">Belongs to the WD repeat G protein beta family.</text>
</comment>
<evidence type="ECO:0000250" key="1">
    <source>
        <dbReference type="UniProtKB" id="P62871"/>
    </source>
</evidence>
<evidence type="ECO:0000250" key="2">
    <source>
        <dbReference type="UniProtKB" id="P62873"/>
    </source>
</evidence>
<evidence type="ECO:0000269" key="3">
    <source>
    </source>
</evidence>
<evidence type="ECO:0000269" key="4">
    <source>
    </source>
</evidence>
<evidence type="ECO:0000269" key="5">
    <source ref="5"/>
</evidence>
<evidence type="ECO:0000305" key="6"/>
<dbReference type="EMBL" id="AF300648">
    <property type="protein sequence ID" value="AAG18442.1"/>
    <property type="molecule type" value="mRNA"/>
</dbReference>
<dbReference type="EMBL" id="AK001890">
    <property type="protein sequence ID" value="BAG50987.1"/>
    <property type="molecule type" value="mRNA"/>
</dbReference>
<dbReference type="EMBL" id="CH471052">
    <property type="protein sequence ID" value="EAW78403.1"/>
    <property type="molecule type" value="Genomic_DNA"/>
</dbReference>
<dbReference type="EMBL" id="CH471052">
    <property type="protein sequence ID" value="EAW78404.1"/>
    <property type="molecule type" value="Genomic_DNA"/>
</dbReference>
<dbReference type="EMBL" id="BC000873">
    <property type="protein sequence ID" value="AAH00873.1"/>
    <property type="molecule type" value="mRNA"/>
</dbReference>
<dbReference type="CCDS" id="CCDS3230.1"/>
<dbReference type="RefSeq" id="NP_067642.1">
    <property type="nucleotide sequence ID" value="NM_021629.4"/>
</dbReference>
<dbReference type="RefSeq" id="XP_005247749.1">
    <property type="nucleotide sequence ID" value="XM_005247692.3"/>
</dbReference>
<dbReference type="RefSeq" id="XP_006713784.1">
    <property type="nucleotide sequence ID" value="XM_006713721.3"/>
</dbReference>
<dbReference type="RefSeq" id="XP_047304609.1">
    <property type="nucleotide sequence ID" value="XM_047448653.1"/>
</dbReference>
<dbReference type="RefSeq" id="XP_047304610.1">
    <property type="nucleotide sequence ID" value="XM_047448654.1"/>
</dbReference>
<dbReference type="RefSeq" id="XP_054203399.1">
    <property type="nucleotide sequence ID" value="XM_054347424.1"/>
</dbReference>
<dbReference type="RefSeq" id="XP_054203400.1">
    <property type="nucleotide sequence ID" value="XM_054347425.1"/>
</dbReference>
<dbReference type="RefSeq" id="XP_054203401.1">
    <property type="nucleotide sequence ID" value="XM_054347426.1"/>
</dbReference>
<dbReference type="RefSeq" id="XP_054203402.1">
    <property type="nucleotide sequence ID" value="XM_054347427.1"/>
</dbReference>
<dbReference type="SMR" id="Q9HAV0"/>
<dbReference type="BioGRID" id="121887">
    <property type="interactions" value="129"/>
</dbReference>
<dbReference type="CORUM" id="Q9HAV0"/>
<dbReference type="FunCoup" id="Q9HAV0">
    <property type="interactions" value="1788"/>
</dbReference>
<dbReference type="IntAct" id="Q9HAV0">
    <property type="interactions" value="63"/>
</dbReference>
<dbReference type="MINT" id="Q9HAV0"/>
<dbReference type="STRING" id="9606.ENSP00000232564"/>
<dbReference type="GlyCosmos" id="Q9HAV0">
    <property type="glycosylation" value="1 site, 1 glycan"/>
</dbReference>
<dbReference type="GlyGen" id="Q9HAV0">
    <property type="glycosylation" value="1 site, 1 O-linked glycan (1 site)"/>
</dbReference>
<dbReference type="iPTMnet" id="Q9HAV0"/>
<dbReference type="PhosphoSitePlus" id="Q9HAV0"/>
<dbReference type="SwissPalm" id="Q9HAV0"/>
<dbReference type="BioMuta" id="GNB4"/>
<dbReference type="DMDM" id="22256759"/>
<dbReference type="OGP" id="Q9HAV0"/>
<dbReference type="jPOST" id="Q9HAV0"/>
<dbReference type="MassIVE" id="Q9HAV0"/>
<dbReference type="PaxDb" id="9606-ENSP00000232564"/>
<dbReference type="PeptideAtlas" id="Q9HAV0"/>
<dbReference type="ProteomicsDB" id="81444"/>
<dbReference type="Pumba" id="Q9HAV0"/>
<dbReference type="Antibodypedia" id="18788">
    <property type="antibodies" value="162 antibodies from 25 providers"/>
</dbReference>
<dbReference type="DNASU" id="59345"/>
<dbReference type="Ensembl" id="ENST00000232564.8">
    <property type="protein sequence ID" value="ENSP00000232564.3"/>
    <property type="gene ID" value="ENSG00000114450.11"/>
</dbReference>
<dbReference type="Ensembl" id="ENST00000674862.1">
    <property type="protein sequence ID" value="ENSP00000502628.1"/>
    <property type="gene ID" value="ENSG00000114450.11"/>
</dbReference>
<dbReference type="Ensembl" id="ENST00000676128.1">
    <property type="protein sequence ID" value="ENSP00000501882.1"/>
    <property type="gene ID" value="ENSG00000114450.11"/>
</dbReference>
<dbReference type="GeneID" id="59345"/>
<dbReference type="KEGG" id="hsa:59345"/>
<dbReference type="MANE-Select" id="ENST00000232564.8">
    <property type="protein sequence ID" value="ENSP00000232564.3"/>
    <property type="RefSeq nucleotide sequence ID" value="NM_021629.4"/>
    <property type="RefSeq protein sequence ID" value="NP_067642.1"/>
</dbReference>
<dbReference type="UCSC" id="uc003fjv.5">
    <property type="organism name" value="human"/>
</dbReference>
<dbReference type="AGR" id="HGNC:20731"/>
<dbReference type="CTD" id="59345"/>
<dbReference type="DisGeNET" id="59345"/>
<dbReference type="GeneCards" id="GNB4"/>
<dbReference type="GeneReviews" id="GNB4"/>
<dbReference type="HGNC" id="HGNC:20731">
    <property type="gene designation" value="GNB4"/>
</dbReference>
<dbReference type="HPA" id="ENSG00000114450">
    <property type="expression patterns" value="Low tissue specificity"/>
</dbReference>
<dbReference type="MalaCards" id="GNB4"/>
<dbReference type="MIM" id="610863">
    <property type="type" value="gene"/>
</dbReference>
<dbReference type="MIM" id="615185">
    <property type="type" value="phenotype"/>
</dbReference>
<dbReference type="neXtProt" id="NX_Q9HAV0"/>
<dbReference type="OpenTargets" id="ENSG00000114450"/>
<dbReference type="Orphanet" id="352670">
    <property type="disease" value="Autosomal dominant intermediate Charcot-Marie-Tooth disease type F"/>
</dbReference>
<dbReference type="PharmGKB" id="PA134864200"/>
<dbReference type="VEuPathDB" id="HostDB:ENSG00000114450"/>
<dbReference type="eggNOG" id="KOG0286">
    <property type="taxonomic scope" value="Eukaryota"/>
</dbReference>
<dbReference type="GeneTree" id="ENSGT01000000214413"/>
<dbReference type="HOGENOM" id="CLU_000288_57_34_1"/>
<dbReference type="InParanoid" id="Q9HAV0"/>
<dbReference type="OMA" id="GDTNCAL"/>
<dbReference type="OrthoDB" id="10255630at2759"/>
<dbReference type="PAN-GO" id="Q9HAV0">
    <property type="GO annotations" value="4 GO annotations based on evolutionary models"/>
</dbReference>
<dbReference type="PhylomeDB" id="Q9HAV0"/>
<dbReference type="TreeFam" id="TF106149"/>
<dbReference type="PathwayCommons" id="Q9HAV0"/>
<dbReference type="Reactome" id="R-HSA-1296041">
    <property type="pathway name" value="Activation of G protein gated Potassium channels"/>
</dbReference>
<dbReference type="Reactome" id="R-HSA-163359">
    <property type="pathway name" value="Glucagon signaling in metabolic regulation"/>
</dbReference>
<dbReference type="Reactome" id="R-HSA-202040">
    <property type="pathway name" value="G-protein activation"/>
</dbReference>
<dbReference type="Reactome" id="R-HSA-381676">
    <property type="pathway name" value="Glucagon-like Peptide-1 (GLP1) regulates insulin secretion"/>
</dbReference>
<dbReference type="Reactome" id="R-HSA-392170">
    <property type="pathway name" value="ADP signalling through P2Y purinoceptor 12"/>
</dbReference>
<dbReference type="Reactome" id="R-HSA-392451">
    <property type="pathway name" value="G beta:gamma signalling through PI3Kgamma"/>
</dbReference>
<dbReference type="Reactome" id="R-HSA-392851">
    <property type="pathway name" value="Prostacyclin signalling through prostacyclin receptor"/>
</dbReference>
<dbReference type="Reactome" id="R-HSA-400042">
    <property type="pathway name" value="Adrenaline,noradrenaline inhibits insulin secretion"/>
</dbReference>
<dbReference type="Reactome" id="R-HSA-4086398">
    <property type="pathway name" value="Ca2+ pathway"/>
</dbReference>
<dbReference type="Reactome" id="R-HSA-416476">
    <property type="pathway name" value="G alpha (q) signalling events"/>
</dbReference>
<dbReference type="Reactome" id="R-HSA-416482">
    <property type="pathway name" value="G alpha (12/13) signalling events"/>
</dbReference>
<dbReference type="Reactome" id="R-HSA-418217">
    <property type="pathway name" value="G beta:gamma signalling through PLC beta"/>
</dbReference>
<dbReference type="Reactome" id="R-HSA-418555">
    <property type="pathway name" value="G alpha (s) signalling events"/>
</dbReference>
<dbReference type="Reactome" id="R-HSA-418592">
    <property type="pathway name" value="ADP signalling through P2Y purinoceptor 1"/>
</dbReference>
<dbReference type="Reactome" id="R-HSA-418594">
    <property type="pathway name" value="G alpha (i) signalling events"/>
</dbReference>
<dbReference type="Reactome" id="R-HSA-418597">
    <property type="pathway name" value="G alpha (z) signalling events"/>
</dbReference>
<dbReference type="Reactome" id="R-HSA-420092">
    <property type="pathway name" value="Glucagon-type ligand receptors"/>
</dbReference>
<dbReference type="Reactome" id="R-HSA-428930">
    <property type="pathway name" value="Thromboxane signalling through TP receptor"/>
</dbReference>
<dbReference type="Reactome" id="R-HSA-432040">
    <property type="pathway name" value="Vasopressin regulates renal water homeostasis via Aquaporins"/>
</dbReference>
<dbReference type="Reactome" id="R-HSA-456926">
    <property type="pathway name" value="Thrombin signalling through proteinase activated receptors (PARs)"/>
</dbReference>
<dbReference type="Reactome" id="R-HSA-500657">
    <property type="pathway name" value="Presynaptic function of Kainate receptors"/>
</dbReference>
<dbReference type="Reactome" id="R-HSA-6814122">
    <property type="pathway name" value="Cooperation of PDCL (PhLP1) and TRiC/CCT in G-protein beta folding"/>
</dbReference>
<dbReference type="Reactome" id="R-HSA-8964315">
    <property type="pathway name" value="G beta:gamma signalling through BTK"/>
</dbReference>
<dbReference type="Reactome" id="R-HSA-8964616">
    <property type="pathway name" value="G beta:gamma signalling through CDC42"/>
</dbReference>
<dbReference type="Reactome" id="R-HSA-9009391">
    <property type="pathway name" value="Extra-nuclear estrogen signaling"/>
</dbReference>
<dbReference type="Reactome" id="R-HSA-9634597">
    <property type="pathway name" value="GPER1 signaling"/>
</dbReference>
<dbReference type="Reactome" id="R-HSA-9660821">
    <property type="pathway name" value="ADORA2B mediated anti-inflammatory cytokines production"/>
</dbReference>
<dbReference type="Reactome" id="R-HSA-9856530">
    <property type="pathway name" value="High laminar flow shear stress activates signaling by PIEZO1 and PECAM1:CDH5:KDR in endothelial cells"/>
</dbReference>
<dbReference type="Reactome" id="R-HSA-997272">
    <property type="pathway name" value="Inhibition of voltage gated Ca2+ channels via Gbeta/gamma subunits"/>
</dbReference>
<dbReference type="SignaLink" id="Q9HAV0"/>
<dbReference type="BioGRID-ORCS" id="59345">
    <property type="hits" value="11 hits in 1158 CRISPR screens"/>
</dbReference>
<dbReference type="CD-CODE" id="FB4E32DD">
    <property type="entry name" value="Presynaptic clusters and postsynaptic densities"/>
</dbReference>
<dbReference type="ChiTaRS" id="GNB4">
    <property type="organism name" value="human"/>
</dbReference>
<dbReference type="GeneWiki" id="GNB4"/>
<dbReference type="GenomeRNAi" id="59345"/>
<dbReference type="Pharos" id="Q9HAV0">
    <property type="development level" value="Tbio"/>
</dbReference>
<dbReference type="PRO" id="PR:Q9HAV0"/>
<dbReference type="Proteomes" id="UP000005640">
    <property type="component" value="Chromosome 3"/>
</dbReference>
<dbReference type="RNAct" id="Q9HAV0">
    <property type="molecule type" value="protein"/>
</dbReference>
<dbReference type="Bgee" id="ENSG00000114450">
    <property type="expression patterns" value="Expressed in upper arm skin and 196 other cell types or tissues"/>
</dbReference>
<dbReference type="ExpressionAtlas" id="Q9HAV0">
    <property type="expression patterns" value="baseline and differential"/>
</dbReference>
<dbReference type="GO" id="GO:0005737">
    <property type="term" value="C:cytoplasm"/>
    <property type="evidence" value="ECO:0000318"/>
    <property type="project" value="GO_Central"/>
</dbReference>
<dbReference type="GO" id="GO:0005829">
    <property type="term" value="C:cytosol"/>
    <property type="evidence" value="ECO:0000304"/>
    <property type="project" value="Reactome"/>
</dbReference>
<dbReference type="GO" id="GO:0070062">
    <property type="term" value="C:extracellular exosome"/>
    <property type="evidence" value="ECO:0007005"/>
    <property type="project" value="UniProtKB"/>
</dbReference>
<dbReference type="GO" id="GO:0005834">
    <property type="term" value="C:heterotrimeric G-protein complex"/>
    <property type="evidence" value="ECO:0000318"/>
    <property type="project" value="GO_Central"/>
</dbReference>
<dbReference type="GO" id="GO:0005765">
    <property type="term" value="C:lysosomal membrane"/>
    <property type="evidence" value="ECO:0007005"/>
    <property type="project" value="UniProtKB"/>
</dbReference>
<dbReference type="GO" id="GO:0045202">
    <property type="term" value="C:synapse"/>
    <property type="evidence" value="ECO:0007669"/>
    <property type="project" value="Ensembl"/>
</dbReference>
<dbReference type="GO" id="GO:0044877">
    <property type="term" value="F:protein-containing complex binding"/>
    <property type="evidence" value="ECO:0000314"/>
    <property type="project" value="MGI"/>
</dbReference>
<dbReference type="GO" id="GO:0030159">
    <property type="term" value="F:signaling receptor complex adaptor activity"/>
    <property type="evidence" value="ECO:0000318"/>
    <property type="project" value="GO_Central"/>
</dbReference>
<dbReference type="GO" id="GO:0007186">
    <property type="term" value="P:G protein-coupled receptor signaling pathway"/>
    <property type="evidence" value="ECO:0000318"/>
    <property type="project" value="GO_Central"/>
</dbReference>
<dbReference type="GO" id="GO:0021762">
    <property type="term" value="P:substantia nigra development"/>
    <property type="evidence" value="ECO:0007007"/>
    <property type="project" value="UniProtKB"/>
</dbReference>
<dbReference type="CDD" id="cd00200">
    <property type="entry name" value="WD40"/>
    <property type="match status" value="1"/>
</dbReference>
<dbReference type="FunFam" id="2.130.10.10:FF:000007">
    <property type="entry name" value="Guanine nucleotide-binding protein G(I)/G(S)/G(T) subunit beta-1"/>
    <property type="match status" value="1"/>
</dbReference>
<dbReference type="Gene3D" id="2.130.10.10">
    <property type="entry name" value="YVTN repeat-like/Quinoprotein amine dehydrogenase"/>
    <property type="match status" value="1"/>
</dbReference>
<dbReference type="InterPro" id="IPR020472">
    <property type="entry name" value="G-protein_beta_WD-40_rep"/>
</dbReference>
<dbReference type="InterPro" id="IPR001632">
    <property type="entry name" value="Gprotein_B"/>
</dbReference>
<dbReference type="InterPro" id="IPR016346">
    <property type="entry name" value="Guanine_nucleotide-bd_bsu"/>
</dbReference>
<dbReference type="InterPro" id="IPR015943">
    <property type="entry name" value="WD40/YVTN_repeat-like_dom_sf"/>
</dbReference>
<dbReference type="InterPro" id="IPR019775">
    <property type="entry name" value="WD40_repeat_CS"/>
</dbReference>
<dbReference type="InterPro" id="IPR036322">
    <property type="entry name" value="WD40_repeat_dom_sf"/>
</dbReference>
<dbReference type="InterPro" id="IPR001680">
    <property type="entry name" value="WD40_rpt"/>
</dbReference>
<dbReference type="PANTHER" id="PTHR19850">
    <property type="entry name" value="GUANINE NUCLEOTIDE-BINDING PROTEIN BETA G PROTEIN BETA"/>
    <property type="match status" value="1"/>
</dbReference>
<dbReference type="Pfam" id="PF25391">
    <property type="entry name" value="WD40_Gbeta"/>
    <property type="match status" value="1"/>
</dbReference>
<dbReference type="PIRSF" id="PIRSF002394">
    <property type="entry name" value="GN-bd_beta"/>
    <property type="match status" value="1"/>
</dbReference>
<dbReference type="PRINTS" id="PR00319">
    <property type="entry name" value="GPROTEINB"/>
</dbReference>
<dbReference type="PRINTS" id="PR00320">
    <property type="entry name" value="GPROTEINBRPT"/>
</dbReference>
<dbReference type="SMART" id="SM00320">
    <property type="entry name" value="WD40"/>
    <property type="match status" value="7"/>
</dbReference>
<dbReference type="SUPFAM" id="SSF50978">
    <property type="entry name" value="WD40 repeat-like"/>
    <property type="match status" value="1"/>
</dbReference>
<dbReference type="PROSITE" id="PS00678">
    <property type="entry name" value="WD_REPEATS_1"/>
    <property type="match status" value="3"/>
</dbReference>
<dbReference type="PROSITE" id="PS50082">
    <property type="entry name" value="WD_REPEATS_2"/>
    <property type="match status" value="6"/>
</dbReference>
<dbReference type="PROSITE" id="PS50294">
    <property type="entry name" value="WD_REPEATS_REGION"/>
    <property type="match status" value="1"/>
</dbReference>
<name>GBB4_HUMAN</name>
<feature type="initiator methionine" description="Removed" evidence="5">
    <location>
        <position position="1"/>
    </location>
</feature>
<feature type="chain" id="PRO_0000127702" description="Guanine nucleotide-binding protein subunit beta-4">
    <location>
        <begin position="2"/>
        <end position="340"/>
    </location>
</feature>
<feature type="repeat" description="WD 1">
    <location>
        <begin position="53"/>
        <end position="92"/>
    </location>
</feature>
<feature type="repeat" description="WD 2">
    <location>
        <begin position="95"/>
        <end position="134"/>
    </location>
</feature>
<feature type="repeat" description="WD 3">
    <location>
        <begin position="141"/>
        <end position="179"/>
    </location>
</feature>
<feature type="repeat" description="WD 4">
    <location>
        <begin position="182"/>
        <end position="221"/>
    </location>
</feature>
<feature type="repeat" description="WD 5">
    <location>
        <begin position="224"/>
        <end position="263"/>
    </location>
</feature>
<feature type="repeat" description="WD 6">
    <location>
        <begin position="268"/>
        <end position="307"/>
    </location>
</feature>
<feature type="repeat" description="WD 7">
    <location>
        <begin position="310"/>
        <end position="339"/>
    </location>
</feature>
<feature type="modified residue" description="N-acetylserine" evidence="5">
    <location>
        <position position="2"/>
    </location>
</feature>
<feature type="modified residue" description="Phosphoserine" evidence="2">
    <location>
        <position position="2"/>
    </location>
</feature>
<feature type="modified residue" description="Phosphohistidine" evidence="1">
    <location>
        <position position="266"/>
    </location>
</feature>
<feature type="sequence variant" id="VAR_069908" description="In CMTDIF; the mutant protein has impaired bradykinin-induced G-protein-coupled receptor intracellular signaling compared to the wild-type protein; dbSNP:rs387907340." evidence="4">
    <original>G</original>
    <variation>D</variation>
    <location>
        <position position="53"/>
    </location>
</feature>
<feature type="sequence variant" id="VAR_069909" description="In CMTDIF; the mutant protein has impaired bradykinin-induced G-protein-coupled receptor intracellular signaling compared to the wild-type protein; dbSNP:rs387907341." evidence="4">
    <original>K</original>
    <variation>E</variation>
    <location>
        <position position="89"/>
    </location>
</feature>
<reference key="1">
    <citation type="journal article" date="2002" name="Physiol. Genomics">
        <title>Cloning, tissue distribution, and functional expression of the human G protein beta 4-subunit.</title>
        <authorList>
            <person name="Ruiz-Velasco V."/>
            <person name="Ikeda S.R."/>
            <person name="Puhl H.L. III"/>
        </authorList>
    </citation>
    <scope>NUCLEOTIDE SEQUENCE [MRNA]</scope>
    <scope>TISSUE SPECIFICITY</scope>
    <source>
        <tissue>Brain</tissue>
    </source>
</reference>
<reference key="2">
    <citation type="journal article" date="2004" name="Nat. Genet.">
        <title>Complete sequencing and characterization of 21,243 full-length human cDNAs.</title>
        <authorList>
            <person name="Ota T."/>
            <person name="Suzuki Y."/>
            <person name="Nishikawa T."/>
            <person name="Otsuki T."/>
            <person name="Sugiyama T."/>
            <person name="Irie R."/>
            <person name="Wakamatsu A."/>
            <person name="Hayashi K."/>
            <person name="Sato H."/>
            <person name="Nagai K."/>
            <person name="Kimura K."/>
            <person name="Makita H."/>
            <person name="Sekine M."/>
            <person name="Obayashi M."/>
            <person name="Nishi T."/>
            <person name="Shibahara T."/>
            <person name="Tanaka T."/>
            <person name="Ishii S."/>
            <person name="Yamamoto J."/>
            <person name="Saito K."/>
            <person name="Kawai Y."/>
            <person name="Isono Y."/>
            <person name="Nakamura Y."/>
            <person name="Nagahari K."/>
            <person name="Murakami K."/>
            <person name="Yasuda T."/>
            <person name="Iwayanagi T."/>
            <person name="Wagatsuma M."/>
            <person name="Shiratori A."/>
            <person name="Sudo H."/>
            <person name="Hosoiri T."/>
            <person name="Kaku Y."/>
            <person name="Kodaira H."/>
            <person name="Kondo H."/>
            <person name="Sugawara M."/>
            <person name="Takahashi M."/>
            <person name="Kanda K."/>
            <person name="Yokoi T."/>
            <person name="Furuya T."/>
            <person name="Kikkawa E."/>
            <person name="Omura Y."/>
            <person name="Abe K."/>
            <person name="Kamihara K."/>
            <person name="Katsuta N."/>
            <person name="Sato K."/>
            <person name="Tanikawa M."/>
            <person name="Yamazaki M."/>
            <person name="Ninomiya K."/>
            <person name="Ishibashi T."/>
            <person name="Yamashita H."/>
            <person name="Murakawa K."/>
            <person name="Fujimori K."/>
            <person name="Tanai H."/>
            <person name="Kimata M."/>
            <person name="Watanabe M."/>
            <person name="Hiraoka S."/>
            <person name="Chiba Y."/>
            <person name="Ishida S."/>
            <person name="Ono Y."/>
            <person name="Takiguchi S."/>
            <person name="Watanabe S."/>
            <person name="Yosida M."/>
            <person name="Hotuta T."/>
            <person name="Kusano J."/>
            <person name="Kanehori K."/>
            <person name="Takahashi-Fujii A."/>
            <person name="Hara H."/>
            <person name="Tanase T.-O."/>
            <person name="Nomura Y."/>
            <person name="Togiya S."/>
            <person name="Komai F."/>
            <person name="Hara R."/>
            <person name="Takeuchi K."/>
            <person name="Arita M."/>
            <person name="Imose N."/>
            <person name="Musashino K."/>
            <person name="Yuuki H."/>
            <person name="Oshima A."/>
            <person name="Sasaki N."/>
            <person name="Aotsuka S."/>
            <person name="Yoshikawa Y."/>
            <person name="Matsunawa H."/>
            <person name="Ichihara T."/>
            <person name="Shiohata N."/>
            <person name="Sano S."/>
            <person name="Moriya S."/>
            <person name="Momiyama H."/>
            <person name="Satoh N."/>
            <person name="Takami S."/>
            <person name="Terashima Y."/>
            <person name="Suzuki O."/>
            <person name="Nakagawa S."/>
            <person name="Senoh A."/>
            <person name="Mizoguchi H."/>
            <person name="Goto Y."/>
            <person name="Shimizu F."/>
            <person name="Wakebe H."/>
            <person name="Hishigaki H."/>
            <person name="Watanabe T."/>
            <person name="Sugiyama A."/>
            <person name="Takemoto M."/>
            <person name="Kawakami B."/>
            <person name="Yamazaki M."/>
            <person name="Watanabe K."/>
            <person name="Kumagai A."/>
            <person name="Itakura S."/>
            <person name="Fukuzumi Y."/>
            <person name="Fujimori Y."/>
            <person name="Komiyama M."/>
            <person name="Tashiro H."/>
            <person name="Tanigami A."/>
            <person name="Fujiwara T."/>
            <person name="Ono T."/>
            <person name="Yamada K."/>
            <person name="Fujii Y."/>
            <person name="Ozaki K."/>
            <person name="Hirao M."/>
            <person name="Ohmori Y."/>
            <person name="Kawabata A."/>
            <person name="Hikiji T."/>
            <person name="Kobatake N."/>
            <person name="Inagaki H."/>
            <person name="Ikema Y."/>
            <person name="Okamoto S."/>
            <person name="Okitani R."/>
            <person name="Kawakami T."/>
            <person name="Noguchi S."/>
            <person name="Itoh T."/>
            <person name="Shigeta K."/>
            <person name="Senba T."/>
            <person name="Matsumura K."/>
            <person name="Nakajima Y."/>
            <person name="Mizuno T."/>
            <person name="Morinaga M."/>
            <person name="Sasaki M."/>
            <person name="Togashi T."/>
            <person name="Oyama M."/>
            <person name="Hata H."/>
            <person name="Watanabe M."/>
            <person name="Komatsu T."/>
            <person name="Mizushima-Sugano J."/>
            <person name="Satoh T."/>
            <person name="Shirai Y."/>
            <person name="Takahashi Y."/>
            <person name="Nakagawa K."/>
            <person name="Okumura K."/>
            <person name="Nagase T."/>
            <person name="Nomura N."/>
            <person name="Kikuchi H."/>
            <person name="Masuho Y."/>
            <person name="Yamashita R."/>
            <person name="Nakai K."/>
            <person name="Yada T."/>
            <person name="Nakamura Y."/>
            <person name="Ohara O."/>
            <person name="Isogai T."/>
            <person name="Sugano S."/>
        </authorList>
    </citation>
    <scope>NUCLEOTIDE SEQUENCE [LARGE SCALE MRNA]</scope>
    <source>
        <tissue>Placenta</tissue>
    </source>
</reference>
<reference key="3">
    <citation type="submission" date="2005-09" db="EMBL/GenBank/DDBJ databases">
        <authorList>
            <person name="Mural R.J."/>
            <person name="Istrail S."/>
            <person name="Sutton G.G."/>
            <person name="Florea L."/>
            <person name="Halpern A.L."/>
            <person name="Mobarry C.M."/>
            <person name="Lippert R."/>
            <person name="Walenz B."/>
            <person name="Shatkay H."/>
            <person name="Dew I."/>
            <person name="Miller J.R."/>
            <person name="Flanigan M.J."/>
            <person name="Edwards N.J."/>
            <person name="Bolanos R."/>
            <person name="Fasulo D."/>
            <person name="Halldorsson B.V."/>
            <person name="Hannenhalli S."/>
            <person name="Turner R."/>
            <person name="Yooseph S."/>
            <person name="Lu F."/>
            <person name="Nusskern D.R."/>
            <person name="Shue B.C."/>
            <person name="Zheng X.H."/>
            <person name="Zhong F."/>
            <person name="Delcher A.L."/>
            <person name="Huson D.H."/>
            <person name="Kravitz S.A."/>
            <person name="Mouchard L."/>
            <person name="Reinert K."/>
            <person name="Remington K.A."/>
            <person name="Clark A.G."/>
            <person name="Waterman M.S."/>
            <person name="Eichler E.E."/>
            <person name="Adams M.D."/>
            <person name="Hunkapiller M.W."/>
            <person name="Myers E.W."/>
            <person name="Venter J.C."/>
        </authorList>
    </citation>
    <scope>NUCLEOTIDE SEQUENCE [LARGE SCALE GENOMIC DNA]</scope>
</reference>
<reference key="4">
    <citation type="journal article" date="2004" name="Genome Res.">
        <title>The status, quality, and expansion of the NIH full-length cDNA project: the Mammalian Gene Collection (MGC).</title>
        <authorList>
            <consortium name="The MGC Project Team"/>
        </authorList>
    </citation>
    <scope>NUCLEOTIDE SEQUENCE [LARGE SCALE MRNA]</scope>
    <source>
        <tissue>Cervix</tissue>
    </source>
</reference>
<reference key="5">
    <citation type="submission" date="2005-07" db="UniProtKB">
        <authorList>
            <person name="Bienvenut W.V."/>
            <person name="Quadroni M."/>
        </authorList>
    </citation>
    <scope>PROTEIN SEQUENCE OF 2-15 AND 58-78</scope>
    <scope>CLEAVAGE OF INITIATOR METHIONINE</scope>
    <scope>ACETYLATION AT SER-2</scope>
    <scope>IDENTIFICATION BY MASS SPECTROMETRY</scope>
    <source>
        <tissue>Melanoma</tissue>
    </source>
</reference>
<reference key="6">
    <citation type="journal article" date="2011" name="BMC Syst. Biol.">
        <title>Initial characterization of the human central proteome.</title>
        <authorList>
            <person name="Burkard T.R."/>
            <person name="Planyavsky M."/>
            <person name="Kaupe I."/>
            <person name="Breitwieser F.P."/>
            <person name="Buerckstuemmer T."/>
            <person name="Bennett K.L."/>
            <person name="Superti-Furga G."/>
            <person name="Colinge J."/>
        </authorList>
    </citation>
    <scope>IDENTIFICATION BY MASS SPECTROMETRY [LARGE SCALE ANALYSIS]</scope>
</reference>
<reference key="7">
    <citation type="journal article" date="2013" name="Am. J. Hum. Genet.">
        <title>Exome sequencing identifies GNB4 mutations as a cause of dominant intermediate Charcot-Marie-Tooth disease.</title>
        <authorList>
            <person name="Soong B.W."/>
            <person name="Huang Y.H."/>
            <person name="Tsai P.C."/>
            <person name="Huang C.C."/>
            <person name="Pan H.C."/>
            <person name="Lu Y.C."/>
            <person name="Chien H.J."/>
            <person name="Liu T.T."/>
            <person name="Chang M.H."/>
            <person name="Lin K.P."/>
            <person name="Tu P.H."/>
            <person name="Kao L.S."/>
            <person name="Lee Y.C."/>
        </authorList>
    </citation>
    <scope>TISSUE SPECIFICITY</scope>
    <scope>VARIANTS CMTDIF ASP-53 AND GLU-89</scope>
    <scope>CHARACTERIZATION OF VARIANTS CMTDIF ASP-53 AND GLU-89</scope>
</reference>
<reference key="8">
    <citation type="journal article" date="2015" name="Proteomics">
        <title>N-terminome analysis of the human mitochondrial proteome.</title>
        <authorList>
            <person name="Vaca Jacome A.S."/>
            <person name="Rabilloud T."/>
            <person name="Schaeffer-Reiss C."/>
            <person name="Rompais M."/>
            <person name="Ayoub D."/>
            <person name="Lane L."/>
            <person name="Bairoch A."/>
            <person name="Van Dorsselaer A."/>
            <person name="Carapito C."/>
        </authorList>
    </citation>
    <scope>IDENTIFICATION BY MASS SPECTROMETRY [LARGE SCALE ANALYSIS]</scope>
</reference>
<gene>
    <name type="primary">GNB4</name>
</gene>
<keyword id="KW-0007">Acetylation</keyword>
<keyword id="KW-0144">Charcot-Marie-Tooth disease</keyword>
<keyword id="KW-0903">Direct protein sequencing</keyword>
<keyword id="KW-0225">Disease variant</keyword>
<keyword id="KW-0523">Neurodegeneration</keyword>
<keyword id="KW-0622">Neuropathy</keyword>
<keyword id="KW-0597">Phosphoprotein</keyword>
<keyword id="KW-1267">Proteomics identification</keyword>
<keyword id="KW-1185">Reference proteome</keyword>
<keyword id="KW-0677">Repeat</keyword>
<keyword id="KW-0807">Transducer</keyword>
<keyword id="KW-0853">WD repeat</keyword>